<sequence length="93" mass="10480">MMSLQMLLLAALLLGTSLQHASAARATNVGRECCLDYFKGAIPIRKLVTWFRTSVECPKDAIVFETVQGRLICTDPKDKHVKKAIRHLKNQRL</sequence>
<gene>
    <name type="primary">Ccl17</name>
    <name type="synonym">Abcd-2</name>
    <name type="synonym">Tarc</name>
</gene>
<keyword id="KW-0145">Chemotaxis</keyword>
<keyword id="KW-0202">Cytokine</keyword>
<keyword id="KW-1015">Disulfide bond</keyword>
<keyword id="KW-0395">Inflammatory response</keyword>
<keyword id="KW-1185">Reference proteome</keyword>
<keyword id="KW-0964">Secreted</keyword>
<keyword id="KW-0732">Signal</keyword>
<accession>Q9ERE0</accession>
<protein>
    <recommendedName>
        <fullName>C-C motif chemokine 17</fullName>
    </recommendedName>
    <alternativeName>
        <fullName>CC chemokine TARC</fullName>
    </alternativeName>
    <alternativeName>
        <fullName>Small-inducible cytokine A17</fullName>
    </alternativeName>
    <alternativeName>
        <fullName>Thymus and activation-regulated chemokine</fullName>
    </alternativeName>
</protein>
<comment type="function">
    <text evidence="1 2">Chemokine, which displays chemotactic activity for T lymphocytes, preferentially Th2 cells, but not monocytes or granulocytes. Therefore plays an important role in a wide range of inflammatory and immunological processes. Acts by binding to CCR4 at T-cell surface. Mediates GM-CSF/CSF2-driven pain and inflammation (By similarity). In the brain, required to maintain the typical, highly branched morphology of hippocampal microglia under homeostatic conditions. May be important for the appropriate adaptation of microglial morphology and synaptic plasticity to acute lipopolysaccharide (LPS)-induced neuroinflammation. Plays a role in wound healing, mainly by inducing fibroblast migration into the wound (By similarity).</text>
</comment>
<comment type="subcellular location">
    <subcellularLocation>
        <location evidence="1">Secreted</location>
    </subcellularLocation>
</comment>
<comment type="similarity">
    <text evidence="4">Belongs to the intercrine beta (chemokine CC) family.</text>
</comment>
<dbReference type="EMBL" id="AF312687">
    <property type="protein sequence ID" value="AAG31159.1"/>
    <property type="molecule type" value="mRNA"/>
</dbReference>
<dbReference type="EMBL" id="AC096512">
    <property type="status" value="NOT_ANNOTATED_CDS"/>
    <property type="molecule type" value="Genomic_DNA"/>
</dbReference>
<dbReference type="RefSeq" id="NP_476492.1">
    <property type="nucleotide sequence ID" value="NM_057151.1"/>
</dbReference>
<dbReference type="SMR" id="Q9ERE0"/>
<dbReference type="FunCoup" id="Q9ERE0">
    <property type="interactions" value="89"/>
</dbReference>
<dbReference type="PhosphoSitePlus" id="Q9ERE0"/>
<dbReference type="GeneID" id="117518"/>
<dbReference type="KEGG" id="rno:117518"/>
<dbReference type="UCSC" id="RGD:619924">
    <property type="organism name" value="rat"/>
</dbReference>
<dbReference type="AGR" id="RGD:619924"/>
<dbReference type="CTD" id="6361"/>
<dbReference type="RGD" id="619924">
    <property type="gene designation" value="Ccl17"/>
</dbReference>
<dbReference type="PhylomeDB" id="Q9ERE0"/>
<dbReference type="PRO" id="PR:Q9ERE0"/>
<dbReference type="Proteomes" id="UP000002494">
    <property type="component" value="Chromosome 19"/>
</dbReference>
<dbReference type="GO" id="GO:0005615">
    <property type="term" value="C:extracellular space"/>
    <property type="evidence" value="ECO:0007669"/>
    <property type="project" value="UniProtKB-KW"/>
</dbReference>
<dbReference type="GO" id="GO:0031729">
    <property type="term" value="F:CCR4 chemokine receptor binding"/>
    <property type="evidence" value="ECO:0000353"/>
    <property type="project" value="RGD"/>
</dbReference>
<dbReference type="GO" id="GO:0008009">
    <property type="term" value="F:chemokine activity"/>
    <property type="evidence" value="ECO:0007669"/>
    <property type="project" value="InterPro"/>
</dbReference>
<dbReference type="GO" id="GO:0006955">
    <property type="term" value="P:immune response"/>
    <property type="evidence" value="ECO:0007669"/>
    <property type="project" value="InterPro"/>
</dbReference>
<dbReference type="GO" id="GO:0006954">
    <property type="term" value="P:inflammatory response"/>
    <property type="evidence" value="ECO:0007669"/>
    <property type="project" value="UniProtKB-KW"/>
</dbReference>
<dbReference type="GO" id="GO:0045662">
    <property type="term" value="P:negative regulation of myoblast differentiation"/>
    <property type="evidence" value="ECO:0000266"/>
    <property type="project" value="RGD"/>
</dbReference>
<dbReference type="CDD" id="cd00272">
    <property type="entry name" value="Chemokine_CC"/>
    <property type="match status" value="1"/>
</dbReference>
<dbReference type="FunFam" id="2.40.50.40:FF:000012">
    <property type="entry name" value="C-C motif chemokine"/>
    <property type="match status" value="1"/>
</dbReference>
<dbReference type="Gene3D" id="2.40.50.40">
    <property type="match status" value="1"/>
</dbReference>
<dbReference type="InterPro" id="IPR039809">
    <property type="entry name" value="Chemokine_b/g/d"/>
</dbReference>
<dbReference type="InterPro" id="IPR000827">
    <property type="entry name" value="Chemokine_CC_CS"/>
</dbReference>
<dbReference type="InterPro" id="IPR001811">
    <property type="entry name" value="Chemokine_IL8-like_dom"/>
</dbReference>
<dbReference type="InterPro" id="IPR036048">
    <property type="entry name" value="Interleukin_8-like_sf"/>
</dbReference>
<dbReference type="PANTHER" id="PTHR12015:SF111">
    <property type="entry name" value="C-C MOTIF CHEMOKINE 17"/>
    <property type="match status" value="1"/>
</dbReference>
<dbReference type="PANTHER" id="PTHR12015">
    <property type="entry name" value="SMALL INDUCIBLE CYTOKINE A"/>
    <property type="match status" value="1"/>
</dbReference>
<dbReference type="Pfam" id="PF00048">
    <property type="entry name" value="IL8"/>
    <property type="match status" value="1"/>
</dbReference>
<dbReference type="PRINTS" id="PR00436">
    <property type="entry name" value="INTERLEUKIN8"/>
</dbReference>
<dbReference type="SMART" id="SM00199">
    <property type="entry name" value="SCY"/>
    <property type="match status" value="1"/>
</dbReference>
<dbReference type="SUPFAM" id="SSF54117">
    <property type="entry name" value="Interleukin 8-like chemokines"/>
    <property type="match status" value="1"/>
</dbReference>
<dbReference type="PROSITE" id="PS00472">
    <property type="entry name" value="SMALL_CYTOKINES_CC"/>
    <property type="match status" value="1"/>
</dbReference>
<proteinExistence type="inferred from homology"/>
<name>CCL17_RAT</name>
<organism>
    <name type="scientific">Rattus norvegicus</name>
    <name type="common">Rat</name>
    <dbReference type="NCBI Taxonomy" id="10116"/>
    <lineage>
        <taxon>Eukaryota</taxon>
        <taxon>Metazoa</taxon>
        <taxon>Chordata</taxon>
        <taxon>Craniata</taxon>
        <taxon>Vertebrata</taxon>
        <taxon>Euteleostomi</taxon>
        <taxon>Mammalia</taxon>
        <taxon>Eutheria</taxon>
        <taxon>Euarchontoglires</taxon>
        <taxon>Glires</taxon>
        <taxon>Rodentia</taxon>
        <taxon>Myomorpha</taxon>
        <taxon>Muroidea</taxon>
        <taxon>Muridae</taxon>
        <taxon>Murinae</taxon>
        <taxon>Rattus</taxon>
    </lineage>
</organism>
<evidence type="ECO:0000250" key="1">
    <source>
        <dbReference type="UniProtKB" id="Q92583"/>
    </source>
</evidence>
<evidence type="ECO:0000250" key="2">
    <source>
        <dbReference type="UniProtKB" id="Q9WUZ6"/>
    </source>
</evidence>
<evidence type="ECO:0000255" key="3">
    <source>
        <dbReference type="RuleBase" id="RU361150"/>
    </source>
</evidence>
<evidence type="ECO:0000305" key="4"/>
<reference key="1">
    <citation type="submission" date="2000-10" db="EMBL/GenBank/DDBJ databases">
        <title>cDNA cloning and analysis of tissue-specific mRNA expression of rat thymus-and activation-regulated chemokine.</title>
        <authorList>
            <person name="Park J.H."/>
            <person name="Ju S.K."/>
        </authorList>
    </citation>
    <scope>NUCLEOTIDE SEQUENCE [MRNA]</scope>
    <source>
        <strain>Sprague-Dawley</strain>
        <tissue>Thymus</tissue>
    </source>
</reference>
<reference key="2">
    <citation type="journal article" date="2004" name="Nature">
        <title>Genome sequence of the Brown Norway rat yields insights into mammalian evolution.</title>
        <authorList>
            <person name="Gibbs R.A."/>
            <person name="Weinstock G.M."/>
            <person name="Metzker M.L."/>
            <person name="Muzny D.M."/>
            <person name="Sodergren E.J."/>
            <person name="Scherer S."/>
            <person name="Scott G."/>
            <person name="Steffen D."/>
            <person name="Worley K.C."/>
            <person name="Burch P.E."/>
            <person name="Okwuonu G."/>
            <person name="Hines S."/>
            <person name="Lewis L."/>
            <person name="Deramo C."/>
            <person name="Delgado O."/>
            <person name="Dugan-Rocha S."/>
            <person name="Miner G."/>
            <person name="Morgan M."/>
            <person name="Hawes A."/>
            <person name="Gill R."/>
            <person name="Holt R.A."/>
            <person name="Adams M.D."/>
            <person name="Amanatides P.G."/>
            <person name="Baden-Tillson H."/>
            <person name="Barnstead M."/>
            <person name="Chin S."/>
            <person name="Evans C.A."/>
            <person name="Ferriera S."/>
            <person name="Fosler C."/>
            <person name="Glodek A."/>
            <person name="Gu Z."/>
            <person name="Jennings D."/>
            <person name="Kraft C.L."/>
            <person name="Nguyen T."/>
            <person name="Pfannkoch C.M."/>
            <person name="Sitter C."/>
            <person name="Sutton G.G."/>
            <person name="Venter J.C."/>
            <person name="Woodage T."/>
            <person name="Smith D."/>
            <person name="Lee H.-M."/>
            <person name="Gustafson E."/>
            <person name="Cahill P."/>
            <person name="Kana A."/>
            <person name="Doucette-Stamm L."/>
            <person name="Weinstock K."/>
            <person name="Fechtel K."/>
            <person name="Weiss R.B."/>
            <person name="Dunn D.M."/>
            <person name="Green E.D."/>
            <person name="Blakesley R.W."/>
            <person name="Bouffard G.G."/>
            <person name="De Jong P.J."/>
            <person name="Osoegawa K."/>
            <person name="Zhu B."/>
            <person name="Marra M."/>
            <person name="Schein J."/>
            <person name="Bosdet I."/>
            <person name="Fjell C."/>
            <person name="Jones S."/>
            <person name="Krzywinski M."/>
            <person name="Mathewson C."/>
            <person name="Siddiqui A."/>
            <person name="Wye N."/>
            <person name="McPherson J."/>
            <person name="Zhao S."/>
            <person name="Fraser C.M."/>
            <person name="Shetty J."/>
            <person name="Shatsman S."/>
            <person name="Geer K."/>
            <person name="Chen Y."/>
            <person name="Abramzon S."/>
            <person name="Nierman W.C."/>
            <person name="Havlak P.H."/>
            <person name="Chen R."/>
            <person name="Durbin K.J."/>
            <person name="Egan A."/>
            <person name="Ren Y."/>
            <person name="Song X.-Z."/>
            <person name="Li B."/>
            <person name="Liu Y."/>
            <person name="Qin X."/>
            <person name="Cawley S."/>
            <person name="Cooney A.J."/>
            <person name="D'Souza L.M."/>
            <person name="Martin K."/>
            <person name="Wu J.Q."/>
            <person name="Gonzalez-Garay M.L."/>
            <person name="Jackson A.R."/>
            <person name="Kalafus K.J."/>
            <person name="McLeod M.P."/>
            <person name="Milosavljevic A."/>
            <person name="Virk D."/>
            <person name="Volkov A."/>
            <person name="Wheeler D.A."/>
            <person name="Zhang Z."/>
            <person name="Bailey J.A."/>
            <person name="Eichler E.E."/>
            <person name="Tuzun E."/>
            <person name="Birney E."/>
            <person name="Mongin E."/>
            <person name="Ureta-Vidal A."/>
            <person name="Woodwark C."/>
            <person name="Zdobnov E."/>
            <person name="Bork P."/>
            <person name="Suyama M."/>
            <person name="Torrents D."/>
            <person name="Alexandersson M."/>
            <person name="Trask B.J."/>
            <person name="Young J.M."/>
            <person name="Huang H."/>
            <person name="Wang H."/>
            <person name="Xing H."/>
            <person name="Daniels S."/>
            <person name="Gietzen D."/>
            <person name="Schmidt J."/>
            <person name="Stevens K."/>
            <person name="Vitt U."/>
            <person name="Wingrove J."/>
            <person name="Camara F."/>
            <person name="Mar Alba M."/>
            <person name="Abril J.F."/>
            <person name="Guigo R."/>
            <person name="Smit A."/>
            <person name="Dubchak I."/>
            <person name="Rubin E.M."/>
            <person name="Couronne O."/>
            <person name="Poliakov A."/>
            <person name="Huebner N."/>
            <person name="Ganten D."/>
            <person name="Goesele C."/>
            <person name="Hummel O."/>
            <person name="Kreitler T."/>
            <person name="Lee Y.-A."/>
            <person name="Monti J."/>
            <person name="Schulz H."/>
            <person name="Zimdahl H."/>
            <person name="Himmelbauer H."/>
            <person name="Lehrach H."/>
            <person name="Jacob H.J."/>
            <person name="Bromberg S."/>
            <person name="Gullings-Handley J."/>
            <person name="Jensen-Seaman M.I."/>
            <person name="Kwitek A.E."/>
            <person name="Lazar J."/>
            <person name="Pasko D."/>
            <person name="Tonellato P.J."/>
            <person name="Twigger S."/>
            <person name="Ponting C.P."/>
            <person name="Duarte J.M."/>
            <person name="Rice S."/>
            <person name="Goodstadt L."/>
            <person name="Beatson S.A."/>
            <person name="Emes R.D."/>
            <person name="Winter E.E."/>
            <person name="Webber C."/>
            <person name="Brandt P."/>
            <person name="Nyakatura G."/>
            <person name="Adetobi M."/>
            <person name="Chiaromonte F."/>
            <person name="Elnitski L."/>
            <person name="Eswara P."/>
            <person name="Hardison R.C."/>
            <person name="Hou M."/>
            <person name="Kolbe D."/>
            <person name="Makova K."/>
            <person name="Miller W."/>
            <person name="Nekrutenko A."/>
            <person name="Riemer C."/>
            <person name="Schwartz S."/>
            <person name="Taylor J."/>
            <person name="Yang S."/>
            <person name="Zhang Y."/>
            <person name="Lindpaintner K."/>
            <person name="Andrews T.D."/>
            <person name="Caccamo M."/>
            <person name="Clamp M."/>
            <person name="Clarke L."/>
            <person name="Curwen V."/>
            <person name="Durbin R.M."/>
            <person name="Eyras E."/>
            <person name="Searle S.M."/>
            <person name="Cooper G.M."/>
            <person name="Batzoglou S."/>
            <person name="Brudno M."/>
            <person name="Sidow A."/>
            <person name="Stone E.A."/>
            <person name="Payseur B.A."/>
            <person name="Bourque G."/>
            <person name="Lopez-Otin C."/>
            <person name="Puente X.S."/>
            <person name="Chakrabarti K."/>
            <person name="Chatterji S."/>
            <person name="Dewey C."/>
            <person name="Pachter L."/>
            <person name="Bray N."/>
            <person name="Yap V.B."/>
            <person name="Caspi A."/>
            <person name="Tesler G."/>
            <person name="Pevzner P.A."/>
            <person name="Haussler D."/>
            <person name="Roskin K.M."/>
            <person name="Baertsch R."/>
            <person name="Clawson H."/>
            <person name="Furey T.S."/>
            <person name="Hinrichs A.S."/>
            <person name="Karolchik D."/>
            <person name="Kent W.J."/>
            <person name="Rosenbloom K.R."/>
            <person name="Trumbower H."/>
            <person name="Weirauch M."/>
            <person name="Cooper D.N."/>
            <person name="Stenson P.D."/>
            <person name="Ma B."/>
            <person name="Brent M."/>
            <person name="Arumugam M."/>
            <person name="Shteynberg D."/>
            <person name="Copley R.R."/>
            <person name="Taylor M.S."/>
            <person name="Riethman H."/>
            <person name="Mudunuri U."/>
            <person name="Peterson J."/>
            <person name="Guyer M."/>
            <person name="Felsenfeld A."/>
            <person name="Old S."/>
            <person name="Mockrin S."/>
            <person name="Collins F.S."/>
        </authorList>
    </citation>
    <scope>NUCLEOTIDE SEQUENCE [LARGE SCALE GENOMIC DNA]</scope>
</reference>
<feature type="signal peptide" evidence="1 3">
    <location>
        <begin position="1"/>
        <end position="23"/>
    </location>
</feature>
<feature type="chain" id="PRO_5005144785" description="C-C motif chemokine 17" evidence="3">
    <location>
        <begin position="24"/>
        <end position="93"/>
    </location>
</feature>
<feature type="disulfide bond" evidence="1">
    <location>
        <begin position="33"/>
        <end position="57"/>
    </location>
</feature>
<feature type="disulfide bond" evidence="1">
    <location>
        <begin position="34"/>
        <end position="73"/>
    </location>
</feature>